<organism>
    <name type="scientific">Wolinella succinogenes (strain ATCC 29543 / DSM 1740 / CCUG 13145 / JCM 31913 / LMG 7466 / NCTC 11488 / FDC 602W)</name>
    <name type="common">Vibrio succinogenes</name>
    <dbReference type="NCBI Taxonomy" id="273121"/>
    <lineage>
        <taxon>Bacteria</taxon>
        <taxon>Pseudomonadati</taxon>
        <taxon>Campylobacterota</taxon>
        <taxon>Epsilonproteobacteria</taxon>
        <taxon>Campylobacterales</taxon>
        <taxon>Helicobacteraceae</taxon>
        <taxon>Wolinella</taxon>
    </lineage>
</organism>
<gene>
    <name evidence="1" type="primary">phnC</name>
    <name type="ordered locus">WS1550</name>
</gene>
<sequence>MLKIENLTKRYKGDEIALKGVSLEIKKGQVVGLIGPSGAGKSTLIRCINRLIEPSSGEVWLEGVNLPSLSRTKLKEARREMGMIFQEYALIERLSVMENVLSGRLGYHSFWRTFWRRFPEAEVERAFYYLERVGLIEHYNKRADQLSGGQRQRVGIARALAQEPKVLLVDEPTASLDPKTSRQVMRLLLELCREKELLAIVNIHDVPLAQAFMERIVGLRAGEVVFDGAPSELDERALTEIYGEEEWKTLQKTHQEESSLGEDSSLLYAKAEIAG</sequence>
<protein>
    <recommendedName>
        <fullName evidence="1">Phosphonates import ATP-binding protein PhnC</fullName>
        <ecNumber evidence="1">7.3.2.2</ecNumber>
    </recommendedName>
</protein>
<dbReference type="EC" id="7.3.2.2" evidence="1"/>
<dbReference type="EMBL" id="BX571661">
    <property type="protein sequence ID" value="CAE10593.1"/>
    <property type="molecule type" value="Genomic_DNA"/>
</dbReference>
<dbReference type="RefSeq" id="WP_011139377.1">
    <property type="nucleotide sequence ID" value="NC_005090.1"/>
</dbReference>
<dbReference type="SMR" id="Q7M8M4"/>
<dbReference type="STRING" id="273121.WS1550"/>
<dbReference type="KEGG" id="wsu:WS1550"/>
<dbReference type="eggNOG" id="COG3638">
    <property type="taxonomic scope" value="Bacteria"/>
</dbReference>
<dbReference type="HOGENOM" id="CLU_000604_1_22_7"/>
<dbReference type="Proteomes" id="UP000000422">
    <property type="component" value="Chromosome"/>
</dbReference>
<dbReference type="GO" id="GO:0005886">
    <property type="term" value="C:plasma membrane"/>
    <property type="evidence" value="ECO:0007669"/>
    <property type="project" value="UniProtKB-SubCell"/>
</dbReference>
<dbReference type="GO" id="GO:0015416">
    <property type="term" value="F:ABC-type phosphonate transporter activity"/>
    <property type="evidence" value="ECO:0007669"/>
    <property type="project" value="UniProtKB-EC"/>
</dbReference>
<dbReference type="GO" id="GO:0005524">
    <property type="term" value="F:ATP binding"/>
    <property type="evidence" value="ECO:0007669"/>
    <property type="project" value="UniProtKB-KW"/>
</dbReference>
<dbReference type="GO" id="GO:0016887">
    <property type="term" value="F:ATP hydrolysis activity"/>
    <property type="evidence" value="ECO:0007669"/>
    <property type="project" value="InterPro"/>
</dbReference>
<dbReference type="CDD" id="cd03256">
    <property type="entry name" value="ABC_PhnC_transporter"/>
    <property type="match status" value="1"/>
</dbReference>
<dbReference type="FunFam" id="3.40.50.300:FF:000134">
    <property type="entry name" value="Iron-enterobactin ABC transporter ATP-binding protein"/>
    <property type="match status" value="1"/>
</dbReference>
<dbReference type="Gene3D" id="3.40.50.300">
    <property type="entry name" value="P-loop containing nucleotide triphosphate hydrolases"/>
    <property type="match status" value="1"/>
</dbReference>
<dbReference type="InterPro" id="IPR003593">
    <property type="entry name" value="AAA+_ATPase"/>
</dbReference>
<dbReference type="InterPro" id="IPR003439">
    <property type="entry name" value="ABC_transporter-like_ATP-bd"/>
</dbReference>
<dbReference type="InterPro" id="IPR017871">
    <property type="entry name" value="ABC_transporter-like_CS"/>
</dbReference>
<dbReference type="InterPro" id="IPR012693">
    <property type="entry name" value="ABC_transpr_PhnC"/>
</dbReference>
<dbReference type="InterPro" id="IPR050086">
    <property type="entry name" value="MetN_ABC_transporter-like"/>
</dbReference>
<dbReference type="InterPro" id="IPR027417">
    <property type="entry name" value="P-loop_NTPase"/>
</dbReference>
<dbReference type="NCBIfam" id="TIGR02315">
    <property type="entry name" value="ABC_phnC"/>
    <property type="match status" value="1"/>
</dbReference>
<dbReference type="PANTHER" id="PTHR43166">
    <property type="entry name" value="AMINO ACID IMPORT ATP-BINDING PROTEIN"/>
    <property type="match status" value="1"/>
</dbReference>
<dbReference type="PANTHER" id="PTHR43166:SF6">
    <property type="entry name" value="PHOSPHONATES IMPORT ATP-BINDING PROTEIN PHNC"/>
    <property type="match status" value="1"/>
</dbReference>
<dbReference type="Pfam" id="PF00005">
    <property type="entry name" value="ABC_tran"/>
    <property type="match status" value="1"/>
</dbReference>
<dbReference type="SMART" id="SM00382">
    <property type="entry name" value="AAA"/>
    <property type="match status" value="1"/>
</dbReference>
<dbReference type="SUPFAM" id="SSF52540">
    <property type="entry name" value="P-loop containing nucleoside triphosphate hydrolases"/>
    <property type="match status" value="1"/>
</dbReference>
<dbReference type="PROSITE" id="PS00211">
    <property type="entry name" value="ABC_TRANSPORTER_1"/>
    <property type="match status" value="1"/>
</dbReference>
<dbReference type="PROSITE" id="PS50893">
    <property type="entry name" value="ABC_TRANSPORTER_2"/>
    <property type="match status" value="1"/>
</dbReference>
<dbReference type="PROSITE" id="PS51249">
    <property type="entry name" value="PHNC"/>
    <property type="match status" value="1"/>
</dbReference>
<name>PHNC_WOLSU</name>
<keyword id="KW-0067">ATP-binding</keyword>
<keyword id="KW-0997">Cell inner membrane</keyword>
<keyword id="KW-1003">Cell membrane</keyword>
<keyword id="KW-0472">Membrane</keyword>
<keyword id="KW-0547">Nucleotide-binding</keyword>
<keyword id="KW-0918">Phosphonate transport</keyword>
<keyword id="KW-1185">Reference proteome</keyword>
<keyword id="KW-1278">Translocase</keyword>
<keyword id="KW-0813">Transport</keyword>
<evidence type="ECO:0000255" key="1">
    <source>
        <dbReference type="HAMAP-Rule" id="MF_01713"/>
    </source>
</evidence>
<proteinExistence type="inferred from homology"/>
<feature type="chain" id="PRO_0000092738" description="Phosphonates import ATP-binding protein PhnC">
    <location>
        <begin position="1"/>
        <end position="275"/>
    </location>
</feature>
<feature type="domain" description="ABC transporter" evidence="1">
    <location>
        <begin position="2"/>
        <end position="246"/>
    </location>
</feature>
<feature type="binding site" evidence="1">
    <location>
        <begin position="35"/>
        <end position="42"/>
    </location>
    <ligand>
        <name>ATP</name>
        <dbReference type="ChEBI" id="CHEBI:30616"/>
    </ligand>
</feature>
<reference key="1">
    <citation type="journal article" date="2003" name="Proc. Natl. Acad. Sci. U.S.A.">
        <title>Complete genome sequence and analysis of Wolinella succinogenes.</title>
        <authorList>
            <person name="Baar C."/>
            <person name="Eppinger M."/>
            <person name="Raddatz G."/>
            <person name="Simon J."/>
            <person name="Lanz C."/>
            <person name="Klimmek O."/>
            <person name="Nandakumar R."/>
            <person name="Gross R."/>
            <person name="Rosinus A."/>
            <person name="Keller H."/>
            <person name="Jagtap P."/>
            <person name="Linke B."/>
            <person name="Meyer F."/>
            <person name="Lederer H."/>
            <person name="Schuster S.C."/>
        </authorList>
    </citation>
    <scope>NUCLEOTIDE SEQUENCE [LARGE SCALE GENOMIC DNA]</scope>
    <source>
        <strain>ATCC 29543 / DSM 1740 / CCUG 13145 / JCM 31913 / LMG 7466 / NCTC 11488 / FDC 602W</strain>
    </source>
</reference>
<comment type="function">
    <text evidence="1">Part of the ABC transporter complex PhnCDE involved in phosphonates import. Responsible for energy coupling to the transport system.</text>
</comment>
<comment type="catalytic activity">
    <reaction evidence="1">
        <text>phosphonate(out) + ATP + H2O = phosphonate(in) + ADP + phosphate + H(+)</text>
        <dbReference type="Rhea" id="RHEA:18065"/>
        <dbReference type="ChEBI" id="CHEBI:15377"/>
        <dbReference type="ChEBI" id="CHEBI:15378"/>
        <dbReference type="ChEBI" id="CHEBI:16215"/>
        <dbReference type="ChEBI" id="CHEBI:30616"/>
        <dbReference type="ChEBI" id="CHEBI:43474"/>
        <dbReference type="ChEBI" id="CHEBI:456216"/>
        <dbReference type="EC" id="7.3.2.2"/>
    </reaction>
</comment>
<comment type="subunit">
    <text evidence="1">The complex is composed of two ATP-binding proteins (PhnC), two transmembrane proteins (PhnE) and a solute-binding protein (PhnD).</text>
</comment>
<comment type="subcellular location">
    <subcellularLocation>
        <location evidence="1">Cell inner membrane</location>
        <topology evidence="1">Peripheral membrane protein</topology>
    </subcellularLocation>
</comment>
<comment type="similarity">
    <text evidence="1">Belongs to the ABC transporter superfamily. Phosphonates importer (TC 3.A.1.9.1) family.</text>
</comment>
<accession>Q7M8M4</accession>